<organism>
    <name type="scientific">Saccharomyces cerevisiae (strain YJM789)</name>
    <name type="common">Baker's yeast</name>
    <dbReference type="NCBI Taxonomy" id="307796"/>
    <lineage>
        <taxon>Eukaryota</taxon>
        <taxon>Fungi</taxon>
        <taxon>Dikarya</taxon>
        <taxon>Ascomycota</taxon>
        <taxon>Saccharomycotina</taxon>
        <taxon>Saccharomycetes</taxon>
        <taxon>Saccharomycetales</taxon>
        <taxon>Saccharomycetaceae</taxon>
        <taxon>Saccharomyces</taxon>
    </lineage>
</organism>
<sequence length="763" mass="86797">MSEEFIAVSTLARNLEIAKGNEFHTILATLRSPVYINEQLLKSELSFLVTKILKLIRSGNDFDLWKGCHTSVVTCAYNPLVLSTHGGQLLAAIYSRLEQKTGFYSSVISSSHGKQLFNILISSVAIIIDLMKNKPTLSREALVPKLKAIIPTLITLSQYEPELVLPVLQRILKRNTTTFKPFTNKFRTVLINLIISDYASLGTKTQRLVCENFAYLHLLKIQVSDTSDDETQAHHKIYADSNWRTGLMSILSQFKPIIQLCGEILDFEQDNELYKLIKSLPVIDESNNKEEFLPSLKLDFNAPLTLWEIPQRLSLLADMLVAFISLPTPFPIRVPLGGINSLCEVLLGVSNKYLPLKKELRRDNELNGVINTILPQIQFQGIRLWEIMVSKYGKCGLSFFEGILSSIELFIPLKKKSNNEIDFNVVGSLKFEFATVFRLVNMILSHLGHQLNIISVISQLIEVALFLSHDKTLIDSLFKNRKSIMKQQTKTKQSKRSKSAEGAFSDIYTHPELFVCKNSMNWFNEINDFFITALNNWILPSTPHIQILKYSITQSLRLKERFGYIPESFVNLLRCEVLHPGSERVSILPIAISLLKNINDDMFELLCHPKVPVGMVYQLHKPLDLGEDGEVRDDINKKEVETNESSSNANTGLETLKALENLENVTIPEPKHEVPKVVDDTAIFKKRSVEEVIERESTSSHKKVKFVEETTVDNGEELIVKKAVNQTKEEEKPMEDSEDEEQEEFEIPAIELSDDEEEEEEEE</sequence>
<dbReference type="EMBL" id="AAFW02000082">
    <property type="protein sequence ID" value="EDN62434.1"/>
    <property type="molecule type" value="Genomic_DNA"/>
</dbReference>
<dbReference type="SMR" id="A6ZTA3"/>
<dbReference type="HOGENOM" id="CLU_020084_0_0_1"/>
<dbReference type="OrthoDB" id="36286at4893"/>
<dbReference type="Proteomes" id="UP000007060">
    <property type="component" value="Unassembled WGS sequence"/>
</dbReference>
<dbReference type="GO" id="GO:0005634">
    <property type="term" value="C:nucleus"/>
    <property type="evidence" value="ECO:0007669"/>
    <property type="project" value="UniProtKB-SubCell"/>
</dbReference>
<dbReference type="GO" id="GO:0006364">
    <property type="term" value="P:rRNA processing"/>
    <property type="evidence" value="ECO:0007669"/>
    <property type="project" value="UniProtKB-KW"/>
</dbReference>
<dbReference type="InterPro" id="IPR012583">
    <property type="entry name" value="RIX1_N"/>
</dbReference>
<dbReference type="PANTHER" id="PTHR34105">
    <property type="entry name" value="PROLINE-, GLUTAMIC ACID- AND LEUCINE-RICH PROTEIN 1"/>
    <property type="match status" value="1"/>
</dbReference>
<dbReference type="PANTHER" id="PTHR34105:SF1">
    <property type="entry name" value="PROLINE-, GLUTAMIC ACID- AND LEUCINE-RICH PROTEIN 1"/>
    <property type="match status" value="1"/>
</dbReference>
<dbReference type="Pfam" id="PF08167">
    <property type="entry name" value="RIX1"/>
    <property type="match status" value="1"/>
</dbReference>
<accession>A6ZTA3</accession>
<reference key="1">
    <citation type="journal article" date="2007" name="Proc. Natl. Acad. Sci. U.S.A.">
        <title>Genome sequencing and comparative analysis of Saccharomyces cerevisiae strain YJM789.</title>
        <authorList>
            <person name="Wei W."/>
            <person name="McCusker J.H."/>
            <person name="Hyman R.W."/>
            <person name="Jones T."/>
            <person name="Ning Y."/>
            <person name="Cao Z."/>
            <person name="Gu Z."/>
            <person name="Bruno D."/>
            <person name="Miranda M."/>
            <person name="Nguyen M."/>
            <person name="Wilhelmy J."/>
            <person name="Komp C."/>
            <person name="Tamse R."/>
            <person name="Wang X."/>
            <person name="Jia P."/>
            <person name="Luedi P."/>
            <person name="Oefner P.J."/>
            <person name="David L."/>
            <person name="Dietrich F.S."/>
            <person name="Li Y."/>
            <person name="Davis R.W."/>
            <person name="Steinmetz L.M."/>
        </authorList>
    </citation>
    <scope>NUCLEOTIDE SEQUENCE [LARGE SCALE GENOMIC DNA]</scope>
    <source>
        <strain>YJM789</strain>
    </source>
</reference>
<keyword id="KW-0007">Acetylation</keyword>
<keyword id="KW-0539">Nucleus</keyword>
<keyword id="KW-0690">Ribosome biogenesis</keyword>
<keyword id="KW-0698">rRNA processing</keyword>
<comment type="function">
    <text evidence="1">Component of the RIX1 complex required for processing of ITS2 sequences from 35S pre-rRNA and the nucleoplasmic transit of the pre-60S ribosomal subunits. Regulates pre-60S association of the critical remodeling factor MDN1.</text>
</comment>
<comment type="subunit">
    <text evidence="1">Component of the RIX1 complex, composed of IPI1, RIX1/IPI2 and IPI3 in a 1:2:2 stoichiometry. The complex interacts (via RIX1) with MDN1 (via its hexameric AAA ATPase ring) and the pre-60S ribosome particles. Interacts with NUG1.</text>
</comment>
<comment type="subcellular location">
    <subcellularLocation>
        <location evidence="1">Nucleus</location>
    </subcellularLocation>
</comment>
<comment type="similarity">
    <text evidence="3">Belongs to the RIX1/PELP1 family.</text>
</comment>
<evidence type="ECO:0000250" key="1">
    <source>
        <dbReference type="UniProtKB" id="P38883"/>
    </source>
</evidence>
<evidence type="ECO:0000256" key="2">
    <source>
        <dbReference type="SAM" id="MobiDB-lite"/>
    </source>
</evidence>
<evidence type="ECO:0000305" key="3"/>
<proteinExistence type="inferred from homology"/>
<name>RIX1_YEAS7</name>
<gene>
    <name type="primary">RIX1</name>
    <name type="ORF">SCY_2587</name>
</gene>
<protein>
    <recommendedName>
        <fullName>Pre-rRNA-processing protein RIX1</fullName>
    </recommendedName>
    <alternativeName>
        <fullName>Ribosomal export protein 1</fullName>
    </alternativeName>
</protein>
<feature type="initiator methionine" description="Removed" evidence="1">
    <location>
        <position position="1"/>
    </location>
</feature>
<feature type="chain" id="PRO_0000308922" description="Pre-rRNA-processing protein RIX1">
    <location>
        <begin position="2"/>
        <end position="763"/>
    </location>
</feature>
<feature type="region of interest" description="Disordered" evidence="2">
    <location>
        <begin position="718"/>
        <end position="763"/>
    </location>
</feature>
<feature type="compositionally biased region" description="Acidic residues" evidence="2">
    <location>
        <begin position="736"/>
        <end position="763"/>
    </location>
</feature>
<feature type="modified residue" description="N-acetylserine" evidence="1">
    <location>
        <position position="2"/>
    </location>
</feature>